<evidence type="ECO:0000255" key="1">
    <source>
        <dbReference type="HAMAP-Rule" id="MF_01601"/>
    </source>
</evidence>
<name>HLDD_MANSM</name>
<comment type="function">
    <text evidence="1">Catalyzes the interconversion between ADP-D-glycero-beta-D-manno-heptose and ADP-L-glycero-beta-D-manno-heptose via an epimerization at carbon 6 of the heptose.</text>
</comment>
<comment type="catalytic activity">
    <reaction evidence="1">
        <text>ADP-D-glycero-beta-D-manno-heptose = ADP-L-glycero-beta-D-manno-heptose</text>
        <dbReference type="Rhea" id="RHEA:17577"/>
        <dbReference type="ChEBI" id="CHEBI:59967"/>
        <dbReference type="ChEBI" id="CHEBI:61506"/>
        <dbReference type="EC" id="5.1.3.20"/>
    </reaction>
</comment>
<comment type="cofactor">
    <cofactor evidence="1">
        <name>NADP(+)</name>
        <dbReference type="ChEBI" id="CHEBI:58349"/>
    </cofactor>
    <text evidence="1">Binds 1 NADP(+) per subunit.</text>
</comment>
<comment type="pathway">
    <text evidence="1">Nucleotide-sugar biosynthesis; ADP-L-glycero-beta-D-manno-heptose biosynthesis; ADP-L-glycero-beta-D-manno-heptose from D-glycero-beta-D-manno-heptose 7-phosphate: step 4/4.</text>
</comment>
<comment type="subunit">
    <text evidence="1">Homopentamer.</text>
</comment>
<comment type="domain">
    <text evidence="1">Contains a large N-terminal NADP-binding domain, and a smaller C-terminal substrate-binding domain.</text>
</comment>
<comment type="similarity">
    <text evidence="1">Belongs to the NAD(P)-dependent epimerase/dehydratase family. HldD subfamily.</text>
</comment>
<reference key="1">
    <citation type="journal article" date="2004" name="Nat. Biotechnol.">
        <title>The genome sequence of the capnophilic rumen bacterium Mannheimia succiniciproducens.</title>
        <authorList>
            <person name="Hong S.H."/>
            <person name="Kim J.S."/>
            <person name="Lee S.Y."/>
            <person name="In Y.H."/>
            <person name="Choi S.S."/>
            <person name="Rih J.-K."/>
            <person name="Kim C.H."/>
            <person name="Jeong H."/>
            <person name="Hur C.G."/>
            <person name="Kim J.J."/>
        </authorList>
    </citation>
    <scope>NUCLEOTIDE SEQUENCE [LARGE SCALE GENOMIC DNA]</scope>
    <source>
        <strain>KCTC 0769BP / MBEL55E</strain>
    </source>
</reference>
<organism>
    <name type="scientific">Mannheimia succiniciproducens (strain KCTC 0769BP / MBEL55E)</name>
    <dbReference type="NCBI Taxonomy" id="221988"/>
    <lineage>
        <taxon>Bacteria</taxon>
        <taxon>Pseudomonadati</taxon>
        <taxon>Pseudomonadota</taxon>
        <taxon>Gammaproteobacteria</taxon>
        <taxon>Pasteurellales</taxon>
        <taxon>Pasteurellaceae</taxon>
        <taxon>Basfia</taxon>
    </lineage>
</organism>
<accession>Q65WA7</accession>
<dbReference type="EC" id="5.1.3.20" evidence="1"/>
<dbReference type="EMBL" id="AE016827">
    <property type="protein sequence ID" value="AAU36753.1"/>
    <property type="molecule type" value="Genomic_DNA"/>
</dbReference>
<dbReference type="RefSeq" id="WP_011199329.1">
    <property type="nucleotide sequence ID" value="NC_006300.1"/>
</dbReference>
<dbReference type="SMR" id="Q65WA7"/>
<dbReference type="STRING" id="221988.MS0146"/>
<dbReference type="KEGG" id="msu:MS0146"/>
<dbReference type="eggNOG" id="COG0451">
    <property type="taxonomic scope" value="Bacteria"/>
</dbReference>
<dbReference type="HOGENOM" id="CLU_007383_1_3_6"/>
<dbReference type="OrthoDB" id="9803010at2"/>
<dbReference type="UniPathway" id="UPA00356">
    <property type="reaction ID" value="UER00440"/>
</dbReference>
<dbReference type="Proteomes" id="UP000000607">
    <property type="component" value="Chromosome"/>
</dbReference>
<dbReference type="GO" id="GO:0008712">
    <property type="term" value="F:ADP-glyceromanno-heptose 6-epimerase activity"/>
    <property type="evidence" value="ECO:0007669"/>
    <property type="project" value="UniProtKB-UniRule"/>
</dbReference>
<dbReference type="GO" id="GO:0050661">
    <property type="term" value="F:NADP binding"/>
    <property type="evidence" value="ECO:0007669"/>
    <property type="project" value="InterPro"/>
</dbReference>
<dbReference type="GO" id="GO:0097171">
    <property type="term" value="P:ADP-L-glycero-beta-D-manno-heptose biosynthetic process"/>
    <property type="evidence" value="ECO:0007669"/>
    <property type="project" value="UniProtKB-UniPathway"/>
</dbReference>
<dbReference type="GO" id="GO:0005975">
    <property type="term" value="P:carbohydrate metabolic process"/>
    <property type="evidence" value="ECO:0007669"/>
    <property type="project" value="UniProtKB-UniRule"/>
</dbReference>
<dbReference type="CDD" id="cd05248">
    <property type="entry name" value="ADP_GME_SDR_e"/>
    <property type="match status" value="1"/>
</dbReference>
<dbReference type="Gene3D" id="3.40.50.720">
    <property type="entry name" value="NAD(P)-binding Rossmann-like Domain"/>
    <property type="match status" value="1"/>
</dbReference>
<dbReference type="Gene3D" id="3.90.25.10">
    <property type="entry name" value="UDP-galactose 4-epimerase, domain 1"/>
    <property type="match status" value="1"/>
</dbReference>
<dbReference type="HAMAP" id="MF_01601">
    <property type="entry name" value="Heptose_epimerase"/>
    <property type="match status" value="1"/>
</dbReference>
<dbReference type="InterPro" id="IPR001509">
    <property type="entry name" value="Epimerase_deHydtase"/>
</dbReference>
<dbReference type="InterPro" id="IPR011912">
    <property type="entry name" value="Heptose_epim"/>
</dbReference>
<dbReference type="InterPro" id="IPR036291">
    <property type="entry name" value="NAD(P)-bd_dom_sf"/>
</dbReference>
<dbReference type="NCBIfam" id="TIGR02197">
    <property type="entry name" value="heptose_epim"/>
    <property type="match status" value="1"/>
</dbReference>
<dbReference type="NCBIfam" id="NF008360">
    <property type="entry name" value="PRK11150.1"/>
    <property type="match status" value="1"/>
</dbReference>
<dbReference type="PANTHER" id="PTHR43103:SF3">
    <property type="entry name" value="ADP-L-GLYCERO-D-MANNO-HEPTOSE-6-EPIMERASE"/>
    <property type="match status" value="1"/>
</dbReference>
<dbReference type="PANTHER" id="PTHR43103">
    <property type="entry name" value="NUCLEOSIDE-DIPHOSPHATE-SUGAR EPIMERASE"/>
    <property type="match status" value="1"/>
</dbReference>
<dbReference type="Pfam" id="PF01370">
    <property type="entry name" value="Epimerase"/>
    <property type="match status" value="1"/>
</dbReference>
<dbReference type="SUPFAM" id="SSF51735">
    <property type="entry name" value="NAD(P)-binding Rossmann-fold domains"/>
    <property type="match status" value="1"/>
</dbReference>
<keyword id="KW-0119">Carbohydrate metabolism</keyword>
<keyword id="KW-0413">Isomerase</keyword>
<keyword id="KW-0521">NADP</keyword>
<proteinExistence type="inferred from homology"/>
<feature type="chain" id="PRO_0000255732" description="ADP-L-glycero-D-manno-heptose-6-epimerase">
    <location>
        <begin position="1"/>
        <end position="308"/>
    </location>
</feature>
<feature type="active site" description="Proton acceptor" evidence="1">
    <location>
        <position position="139"/>
    </location>
</feature>
<feature type="active site" description="Proton acceptor" evidence="1">
    <location>
        <position position="177"/>
    </location>
</feature>
<feature type="binding site" evidence="1">
    <location>
        <begin position="10"/>
        <end position="11"/>
    </location>
    <ligand>
        <name>NADP(+)</name>
        <dbReference type="ChEBI" id="CHEBI:58349"/>
    </ligand>
</feature>
<feature type="binding site" evidence="1">
    <location>
        <begin position="31"/>
        <end position="32"/>
    </location>
    <ligand>
        <name>NADP(+)</name>
        <dbReference type="ChEBI" id="CHEBI:58349"/>
    </ligand>
</feature>
<feature type="binding site" evidence="1">
    <location>
        <position position="38"/>
    </location>
    <ligand>
        <name>NADP(+)</name>
        <dbReference type="ChEBI" id="CHEBI:58349"/>
    </ligand>
</feature>
<feature type="binding site" evidence="1">
    <location>
        <position position="53"/>
    </location>
    <ligand>
        <name>NADP(+)</name>
        <dbReference type="ChEBI" id="CHEBI:58349"/>
    </ligand>
</feature>
<feature type="binding site" evidence="1">
    <location>
        <begin position="75"/>
        <end position="79"/>
    </location>
    <ligand>
        <name>NADP(+)</name>
        <dbReference type="ChEBI" id="CHEBI:58349"/>
    </ligand>
</feature>
<feature type="binding site" evidence="1">
    <location>
        <position position="92"/>
    </location>
    <ligand>
        <name>NADP(+)</name>
        <dbReference type="ChEBI" id="CHEBI:58349"/>
    </ligand>
</feature>
<feature type="binding site" evidence="1">
    <location>
        <position position="143"/>
    </location>
    <ligand>
        <name>NADP(+)</name>
        <dbReference type="ChEBI" id="CHEBI:58349"/>
    </ligand>
</feature>
<feature type="binding site" evidence="1">
    <location>
        <position position="168"/>
    </location>
    <ligand>
        <name>substrate</name>
    </ligand>
</feature>
<feature type="binding site" evidence="1">
    <location>
        <position position="169"/>
    </location>
    <ligand>
        <name>NADP(+)</name>
        <dbReference type="ChEBI" id="CHEBI:58349"/>
    </ligand>
</feature>
<feature type="binding site" evidence="1">
    <location>
        <position position="177"/>
    </location>
    <ligand>
        <name>NADP(+)</name>
        <dbReference type="ChEBI" id="CHEBI:58349"/>
    </ligand>
</feature>
<feature type="binding site" evidence="1">
    <location>
        <position position="179"/>
    </location>
    <ligand>
        <name>substrate</name>
    </ligand>
</feature>
<feature type="binding site" evidence="1">
    <location>
        <position position="186"/>
    </location>
    <ligand>
        <name>substrate</name>
    </ligand>
</feature>
<feature type="binding site" evidence="1">
    <location>
        <begin position="200"/>
        <end position="203"/>
    </location>
    <ligand>
        <name>substrate</name>
    </ligand>
</feature>
<feature type="binding site" evidence="1">
    <location>
        <position position="208"/>
    </location>
    <ligand>
        <name>substrate</name>
    </ligand>
</feature>
<feature type="binding site" evidence="1">
    <location>
        <position position="271"/>
    </location>
    <ligand>
        <name>substrate</name>
    </ligand>
</feature>
<protein>
    <recommendedName>
        <fullName evidence="1">ADP-L-glycero-D-manno-heptose-6-epimerase</fullName>
        <ecNumber evidence="1">5.1.3.20</ecNumber>
    </recommendedName>
    <alternativeName>
        <fullName evidence="1">ADP-L-glycero-beta-D-manno-heptose-6-epimerase</fullName>
        <shortName evidence="1">ADP-glyceromanno-heptose 6-epimerase</shortName>
        <shortName evidence="1">ADP-hep 6-epimerase</shortName>
        <shortName evidence="1">AGME</shortName>
    </alternativeName>
</protein>
<sequence>MIIVTGGAGMIGANIVKALNDMGRKDILVVDNLKDGTKFINLVDLDIADYCDKEDFISSVIAGDDLGDIDAVFHEGACSATTEWDGKYLMHNNYEYSKELLHYCLDREIPFFYASSAATYGDKTDFIEEREFEGPLNAYGYSKFLFDQYVRAILPEANSPVCGFKYFNVYGPREQHKGSMASVAFHLNNQILKGENPKLFAGSEHFLRDFVYVGDVAEVNLWAWENGVSGIFNLGTGNAESFKAVAEAVVKFHGKGEIETIPFPDHLKSRYQEYTQANLTKLRAAGCDFKFKNVAEGVAEYMAWLNRK</sequence>
<gene>
    <name evidence="1" type="primary">hldD</name>
    <name type="ordered locus">MS0146</name>
</gene>